<name>FMOD_HUMAN</name>
<organism>
    <name type="scientific">Homo sapiens</name>
    <name type="common">Human</name>
    <dbReference type="NCBI Taxonomy" id="9606"/>
    <lineage>
        <taxon>Eukaryota</taxon>
        <taxon>Metazoa</taxon>
        <taxon>Chordata</taxon>
        <taxon>Craniata</taxon>
        <taxon>Vertebrata</taxon>
        <taxon>Euteleostomi</taxon>
        <taxon>Mammalia</taxon>
        <taxon>Eutheria</taxon>
        <taxon>Euarchontoglires</taxon>
        <taxon>Primates</taxon>
        <taxon>Haplorrhini</taxon>
        <taxon>Catarrhini</taxon>
        <taxon>Hominidae</taxon>
        <taxon>Homo</taxon>
    </lineage>
</organism>
<keyword id="KW-0002">3D-structure</keyword>
<keyword id="KW-1015">Disulfide bond</keyword>
<keyword id="KW-0272">Extracellular matrix</keyword>
<keyword id="KW-0325">Glycoprotein</keyword>
<keyword id="KW-0433">Leucine-rich repeat</keyword>
<keyword id="KW-0654">Proteoglycan</keyword>
<keyword id="KW-1267">Proteomics identification</keyword>
<keyword id="KW-0873">Pyrrolidone carboxylic acid</keyword>
<keyword id="KW-1185">Reference proteome</keyword>
<keyword id="KW-0677">Repeat</keyword>
<keyword id="KW-0964">Secreted</keyword>
<keyword id="KW-0732">Signal</keyword>
<keyword id="KW-0765">Sulfation</keyword>
<dbReference type="EMBL" id="X72913">
    <property type="protein sequence ID" value="CAA51418.1"/>
    <property type="molecule type" value="Genomic_DNA"/>
</dbReference>
<dbReference type="EMBL" id="X75546">
    <property type="protein sequence ID" value="CAA53233.1"/>
    <property type="molecule type" value="mRNA"/>
</dbReference>
<dbReference type="EMBL" id="AK291632">
    <property type="protein sequence ID" value="BAF84321.1"/>
    <property type="molecule type" value="mRNA"/>
</dbReference>
<dbReference type="EMBL" id="AL359837">
    <property type="status" value="NOT_ANNOTATED_CDS"/>
    <property type="molecule type" value="Genomic_DNA"/>
</dbReference>
<dbReference type="EMBL" id="CH471067">
    <property type="protein sequence ID" value="EAW91477.1"/>
    <property type="molecule type" value="Genomic_DNA"/>
</dbReference>
<dbReference type="EMBL" id="BC035281">
    <property type="protein sequence ID" value="AAH35281.1"/>
    <property type="molecule type" value="mRNA"/>
</dbReference>
<dbReference type="CCDS" id="CCDS30976.1"/>
<dbReference type="PIR" id="S55275">
    <property type="entry name" value="S55275"/>
</dbReference>
<dbReference type="RefSeq" id="NP_002014.2">
    <property type="nucleotide sequence ID" value="NM_002023.5"/>
</dbReference>
<dbReference type="RefSeq" id="XP_047272260.1">
    <property type="nucleotide sequence ID" value="XM_047416304.1"/>
</dbReference>
<dbReference type="PDB" id="5MX0">
    <property type="method" value="X-ray"/>
    <property type="resolution" value="2.21 A"/>
    <property type="chains" value="A/B=18-376"/>
</dbReference>
<dbReference type="PDBsum" id="5MX0"/>
<dbReference type="SMR" id="Q06828"/>
<dbReference type="BioGRID" id="108618">
    <property type="interactions" value="50"/>
</dbReference>
<dbReference type="FunCoup" id="Q06828">
    <property type="interactions" value="143"/>
</dbReference>
<dbReference type="IntAct" id="Q06828">
    <property type="interactions" value="37"/>
</dbReference>
<dbReference type="MINT" id="Q06828"/>
<dbReference type="STRING" id="9606.ENSP00000347041"/>
<dbReference type="GlyConnect" id="1242">
    <property type="glycosylation" value="54 N-Linked glycans (3 sites)"/>
</dbReference>
<dbReference type="GlyCosmos" id="Q06828">
    <property type="glycosylation" value="6 sites, 64 glycans"/>
</dbReference>
<dbReference type="GlyGen" id="Q06828">
    <property type="glycosylation" value="7 sites, 103 N-linked glycans (3 sites), 2 O-linked glycans (1 site)"/>
</dbReference>
<dbReference type="iPTMnet" id="Q06828"/>
<dbReference type="PhosphoSitePlus" id="Q06828"/>
<dbReference type="BioMuta" id="FMOD"/>
<dbReference type="DMDM" id="223590208"/>
<dbReference type="jPOST" id="Q06828"/>
<dbReference type="MassIVE" id="Q06828"/>
<dbReference type="PaxDb" id="9606-ENSP00000347041"/>
<dbReference type="PeptideAtlas" id="Q06828"/>
<dbReference type="ProteomicsDB" id="58485"/>
<dbReference type="Antibodypedia" id="34544">
    <property type="antibodies" value="287 antibodies from 29 providers"/>
</dbReference>
<dbReference type="DNASU" id="2331"/>
<dbReference type="Ensembl" id="ENST00000354955.5">
    <property type="protein sequence ID" value="ENSP00000347041.4"/>
    <property type="gene ID" value="ENSG00000122176.12"/>
</dbReference>
<dbReference type="GeneID" id="2331"/>
<dbReference type="KEGG" id="hsa:2331"/>
<dbReference type="MANE-Select" id="ENST00000354955.5">
    <property type="protein sequence ID" value="ENSP00000347041.4"/>
    <property type="RefSeq nucleotide sequence ID" value="NM_002023.5"/>
    <property type="RefSeq protein sequence ID" value="NP_002014.2"/>
</dbReference>
<dbReference type="UCSC" id="uc001gzr.5">
    <property type="organism name" value="human"/>
</dbReference>
<dbReference type="AGR" id="HGNC:3774"/>
<dbReference type="CTD" id="2331"/>
<dbReference type="DisGeNET" id="2331"/>
<dbReference type="GeneCards" id="FMOD"/>
<dbReference type="HGNC" id="HGNC:3774">
    <property type="gene designation" value="FMOD"/>
</dbReference>
<dbReference type="HPA" id="ENSG00000122176">
    <property type="expression patterns" value="Low tissue specificity"/>
</dbReference>
<dbReference type="MIM" id="600245">
    <property type="type" value="gene"/>
</dbReference>
<dbReference type="neXtProt" id="NX_Q06828"/>
<dbReference type="OpenTargets" id="ENSG00000122176"/>
<dbReference type="PharmGKB" id="PA28190"/>
<dbReference type="VEuPathDB" id="HostDB:ENSG00000122176"/>
<dbReference type="eggNOG" id="KOG0619">
    <property type="taxonomic scope" value="Eukaryota"/>
</dbReference>
<dbReference type="GeneTree" id="ENSGT00940000157007"/>
<dbReference type="HOGENOM" id="CLU_000288_186_4_1"/>
<dbReference type="InParanoid" id="Q06828"/>
<dbReference type="OMA" id="WWFQYLR"/>
<dbReference type="OrthoDB" id="1668230at2759"/>
<dbReference type="PAN-GO" id="Q06828">
    <property type="GO annotations" value="1 GO annotation based on evolutionary models"/>
</dbReference>
<dbReference type="PhylomeDB" id="Q06828"/>
<dbReference type="TreeFam" id="TF334562"/>
<dbReference type="PathwayCommons" id="Q06828"/>
<dbReference type="Reactome" id="R-HSA-2022854">
    <property type="pathway name" value="Keratan sulfate biosynthesis"/>
</dbReference>
<dbReference type="Reactome" id="R-HSA-2022857">
    <property type="pathway name" value="Keratan sulfate degradation"/>
</dbReference>
<dbReference type="Reactome" id="R-HSA-3000178">
    <property type="pathway name" value="ECM proteoglycans"/>
</dbReference>
<dbReference type="Reactome" id="R-HSA-3656225">
    <property type="pathway name" value="Defective CHST6 causes MCDC1"/>
</dbReference>
<dbReference type="Reactome" id="R-HSA-3656243">
    <property type="pathway name" value="Defective ST3GAL3 causes MCT12 and EIEE15"/>
</dbReference>
<dbReference type="Reactome" id="R-HSA-3656244">
    <property type="pathway name" value="Defective B4GALT1 causes B4GALT1-CDG (CDG-2d)"/>
</dbReference>
<dbReference type="SignaLink" id="Q06828"/>
<dbReference type="BioGRID-ORCS" id="2331">
    <property type="hits" value="5 hits in 1144 CRISPR screens"/>
</dbReference>
<dbReference type="ChiTaRS" id="FMOD">
    <property type="organism name" value="human"/>
</dbReference>
<dbReference type="GeneWiki" id="FMOD_(gene)"/>
<dbReference type="GenomeRNAi" id="2331"/>
<dbReference type="Pharos" id="Q06828">
    <property type="development level" value="Tbio"/>
</dbReference>
<dbReference type="PRO" id="PR:Q06828"/>
<dbReference type="Proteomes" id="UP000005640">
    <property type="component" value="Chromosome 1"/>
</dbReference>
<dbReference type="RNAct" id="Q06828">
    <property type="molecule type" value="protein"/>
</dbReference>
<dbReference type="Bgee" id="ENSG00000122176">
    <property type="expression patterns" value="Expressed in calcaneal tendon and 173 other cell types or tissues"/>
</dbReference>
<dbReference type="ExpressionAtlas" id="Q06828">
    <property type="expression patterns" value="baseline and differential"/>
</dbReference>
<dbReference type="GO" id="GO:0062023">
    <property type="term" value="C:collagen-containing extracellular matrix"/>
    <property type="evidence" value="ECO:0007005"/>
    <property type="project" value="BHF-UCL"/>
</dbReference>
<dbReference type="GO" id="GO:0031012">
    <property type="term" value="C:extracellular matrix"/>
    <property type="evidence" value="ECO:0000304"/>
    <property type="project" value="ProtInc"/>
</dbReference>
<dbReference type="GO" id="GO:0005576">
    <property type="term" value="C:extracellular region"/>
    <property type="evidence" value="ECO:0007005"/>
    <property type="project" value="BHF-UCL"/>
</dbReference>
<dbReference type="GO" id="GO:0005615">
    <property type="term" value="C:extracellular space"/>
    <property type="evidence" value="ECO:0007005"/>
    <property type="project" value="BHF-UCL"/>
</dbReference>
<dbReference type="GO" id="GO:0005796">
    <property type="term" value="C:Golgi lumen"/>
    <property type="evidence" value="ECO:0000304"/>
    <property type="project" value="Reactome"/>
</dbReference>
<dbReference type="GO" id="GO:0043202">
    <property type="term" value="C:lysosomal lumen"/>
    <property type="evidence" value="ECO:0000304"/>
    <property type="project" value="Reactome"/>
</dbReference>
<dbReference type="GO" id="GO:0030199">
    <property type="term" value="P:collagen fibril organization"/>
    <property type="evidence" value="ECO:0007669"/>
    <property type="project" value="Ensembl"/>
</dbReference>
<dbReference type="GO" id="GO:0007181">
    <property type="term" value="P:transforming growth factor beta receptor complex assembly"/>
    <property type="evidence" value="ECO:0000304"/>
    <property type="project" value="ProtInc"/>
</dbReference>
<dbReference type="FunFam" id="3.80.10.10:FF:000460">
    <property type="entry name" value="Fibromodulin"/>
    <property type="match status" value="1"/>
</dbReference>
<dbReference type="FunFam" id="3.80.10.10:FF:000390">
    <property type="entry name" value="fibromodulin"/>
    <property type="match status" value="1"/>
</dbReference>
<dbReference type="Gene3D" id="3.80.10.10">
    <property type="entry name" value="Ribonuclease Inhibitor"/>
    <property type="match status" value="3"/>
</dbReference>
<dbReference type="InterPro" id="IPR001611">
    <property type="entry name" value="Leu-rich_rpt"/>
</dbReference>
<dbReference type="InterPro" id="IPR003591">
    <property type="entry name" value="Leu-rich_rpt_typical-subtyp"/>
</dbReference>
<dbReference type="InterPro" id="IPR032675">
    <property type="entry name" value="LRR_dom_sf"/>
</dbReference>
<dbReference type="InterPro" id="IPR000372">
    <property type="entry name" value="LRRNT"/>
</dbReference>
<dbReference type="InterPro" id="IPR050333">
    <property type="entry name" value="SLRP"/>
</dbReference>
<dbReference type="PANTHER" id="PTHR45712">
    <property type="entry name" value="AGAP008170-PA"/>
    <property type="match status" value="1"/>
</dbReference>
<dbReference type="PANTHER" id="PTHR45712:SF4">
    <property type="entry name" value="FIBROMODULIN"/>
    <property type="match status" value="1"/>
</dbReference>
<dbReference type="Pfam" id="PF00560">
    <property type="entry name" value="LRR_1"/>
    <property type="match status" value="1"/>
</dbReference>
<dbReference type="Pfam" id="PF13516">
    <property type="entry name" value="LRR_6"/>
    <property type="match status" value="1"/>
</dbReference>
<dbReference type="Pfam" id="PF13855">
    <property type="entry name" value="LRR_8"/>
    <property type="match status" value="2"/>
</dbReference>
<dbReference type="Pfam" id="PF01462">
    <property type="entry name" value="LRRNT"/>
    <property type="match status" value="1"/>
</dbReference>
<dbReference type="SMART" id="SM00364">
    <property type="entry name" value="LRR_BAC"/>
    <property type="match status" value="5"/>
</dbReference>
<dbReference type="SMART" id="SM00369">
    <property type="entry name" value="LRR_TYP"/>
    <property type="match status" value="8"/>
</dbReference>
<dbReference type="SMART" id="SM00013">
    <property type="entry name" value="LRRNT"/>
    <property type="match status" value="1"/>
</dbReference>
<dbReference type="SUPFAM" id="SSF52058">
    <property type="entry name" value="L domain-like"/>
    <property type="match status" value="1"/>
</dbReference>
<dbReference type="PROSITE" id="PS51450">
    <property type="entry name" value="LRR"/>
    <property type="match status" value="10"/>
</dbReference>
<proteinExistence type="evidence at protein level"/>
<evidence type="ECO:0000250" key="1"/>
<evidence type="ECO:0000255" key="2"/>
<evidence type="ECO:0000269" key="3">
    <source>
    </source>
</evidence>
<evidence type="ECO:0000305" key="4"/>
<evidence type="ECO:0000305" key="5">
    <source>
    </source>
</evidence>
<evidence type="ECO:0007829" key="6">
    <source>
        <dbReference type="PDB" id="5MX0"/>
    </source>
</evidence>
<accession>Q06828</accession>
<accession>Q15331</accession>
<accession>Q8IV47</accession>
<gene>
    <name type="primary">FMOD</name>
    <name type="synonym">FM</name>
    <name type="synonym">SLRR2E</name>
</gene>
<protein>
    <recommendedName>
        <fullName>Fibromodulin</fullName>
        <shortName>FM</shortName>
    </recommendedName>
    <alternativeName>
        <fullName>Collagen-binding 59 kDa protein</fullName>
    </alternativeName>
    <alternativeName>
        <fullName>Keratan sulfate proteoglycan fibromodulin</fullName>
        <shortName>KSPG fibromodulin</shortName>
    </alternativeName>
</protein>
<reference key="1">
    <citation type="journal article" date="1993" name="Biochim. Biophys. Acta">
        <title>Structure and deduced amino acid sequence of the human fibromodulin gene.</title>
        <authorList>
            <person name="Antonsson P."/>
            <person name="Heinegaard D."/>
            <person name="Oldberg A."/>
        </authorList>
    </citation>
    <scope>NUCLEOTIDE SEQUENCE [GENOMIC DNA]</scope>
</reference>
<reference key="2">
    <citation type="journal article" date="1994" name="Biochem. J.">
        <title>Interaction of the small interstitial proteoglycans biglycan, decorin and fibromodulin with transforming growth factor beta.</title>
        <authorList>
            <person name="Hildebrand A."/>
            <person name="Romaris M."/>
            <person name="Rasmussen L.M."/>
            <person name="Heinegard D."/>
            <person name="Twardzik D.R."/>
            <person name="Border W.A."/>
            <person name="Ruoslahti E."/>
        </authorList>
    </citation>
    <scope>NUCLEOTIDE SEQUENCE [MRNA]</scope>
</reference>
<reference key="3">
    <citation type="journal article" date="2004" name="Nat. Genet.">
        <title>Complete sequencing and characterization of 21,243 full-length human cDNAs.</title>
        <authorList>
            <person name="Ota T."/>
            <person name="Suzuki Y."/>
            <person name="Nishikawa T."/>
            <person name="Otsuki T."/>
            <person name="Sugiyama T."/>
            <person name="Irie R."/>
            <person name="Wakamatsu A."/>
            <person name="Hayashi K."/>
            <person name="Sato H."/>
            <person name="Nagai K."/>
            <person name="Kimura K."/>
            <person name="Makita H."/>
            <person name="Sekine M."/>
            <person name="Obayashi M."/>
            <person name="Nishi T."/>
            <person name="Shibahara T."/>
            <person name="Tanaka T."/>
            <person name="Ishii S."/>
            <person name="Yamamoto J."/>
            <person name="Saito K."/>
            <person name="Kawai Y."/>
            <person name="Isono Y."/>
            <person name="Nakamura Y."/>
            <person name="Nagahari K."/>
            <person name="Murakami K."/>
            <person name="Yasuda T."/>
            <person name="Iwayanagi T."/>
            <person name="Wagatsuma M."/>
            <person name="Shiratori A."/>
            <person name="Sudo H."/>
            <person name="Hosoiri T."/>
            <person name="Kaku Y."/>
            <person name="Kodaira H."/>
            <person name="Kondo H."/>
            <person name="Sugawara M."/>
            <person name="Takahashi M."/>
            <person name="Kanda K."/>
            <person name="Yokoi T."/>
            <person name="Furuya T."/>
            <person name="Kikkawa E."/>
            <person name="Omura Y."/>
            <person name="Abe K."/>
            <person name="Kamihara K."/>
            <person name="Katsuta N."/>
            <person name="Sato K."/>
            <person name="Tanikawa M."/>
            <person name="Yamazaki M."/>
            <person name="Ninomiya K."/>
            <person name="Ishibashi T."/>
            <person name="Yamashita H."/>
            <person name="Murakawa K."/>
            <person name="Fujimori K."/>
            <person name="Tanai H."/>
            <person name="Kimata M."/>
            <person name="Watanabe M."/>
            <person name="Hiraoka S."/>
            <person name="Chiba Y."/>
            <person name="Ishida S."/>
            <person name="Ono Y."/>
            <person name="Takiguchi S."/>
            <person name="Watanabe S."/>
            <person name="Yosida M."/>
            <person name="Hotuta T."/>
            <person name="Kusano J."/>
            <person name="Kanehori K."/>
            <person name="Takahashi-Fujii A."/>
            <person name="Hara H."/>
            <person name="Tanase T.-O."/>
            <person name="Nomura Y."/>
            <person name="Togiya S."/>
            <person name="Komai F."/>
            <person name="Hara R."/>
            <person name="Takeuchi K."/>
            <person name="Arita M."/>
            <person name="Imose N."/>
            <person name="Musashino K."/>
            <person name="Yuuki H."/>
            <person name="Oshima A."/>
            <person name="Sasaki N."/>
            <person name="Aotsuka S."/>
            <person name="Yoshikawa Y."/>
            <person name="Matsunawa H."/>
            <person name="Ichihara T."/>
            <person name="Shiohata N."/>
            <person name="Sano S."/>
            <person name="Moriya S."/>
            <person name="Momiyama H."/>
            <person name="Satoh N."/>
            <person name="Takami S."/>
            <person name="Terashima Y."/>
            <person name="Suzuki O."/>
            <person name="Nakagawa S."/>
            <person name="Senoh A."/>
            <person name="Mizoguchi H."/>
            <person name="Goto Y."/>
            <person name="Shimizu F."/>
            <person name="Wakebe H."/>
            <person name="Hishigaki H."/>
            <person name="Watanabe T."/>
            <person name="Sugiyama A."/>
            <person name="Takemoto M."/>
            <person name="Kawakami B."/>
            <person name="Yamazaki M."/>
            <person name="Watanabe K."/>
            <person name="Kumagai A."/>
            <person name="Itakura S."/>
            <person name="Fukuzumi Y."/>
            <person name="Fujimori Y."/>
            <person name="Komiyama M."/>
            <person name="Tashiro H."/>
            <person name="Tanigami A."/>
            <person name="Fujiwara T."/>
            <person name="Ono T."/>
            <person name="Yamada K."/>
            <person name="Fujii Y."/>
            <person name="Ozaki K."/>
            <person name="Hirao M."/>
            <person name="Ohmori Y."/>
            <person name="Kawabata A."/>
            <person name="Hikiji T."/>
            <person name="Kobatake N."/>
            <person name="Inagaki H."/>
            <person name="Ikema Y."/>
            <person name="Okamoto S."/>
            <person name="Okitani R."/>
            <person name="Kawakami T."/>
            <person name="Noguchi S."/>
            <person name="Itoh T."/>
            <person name="Shigeta K."/>
            <person name="Senba T."/>
            <person name="Matsumura K."/>
            <person name="Nakajima Y."/>
            <person name="Mizuno T."/>
            <person name="Morinaga M."/>
            <person name="Sasaki M."/>
            <person name="Togashi T."/>
            <person name="Oyama M."/>
            <person name="Hata H."/>
            <person name="Watanabe M."/>
            <person name="Komatsu T."/>
            <person name="Mizushima-Sugano J."/>
            <person name="Satoh T."/>
            <person name="Shirai Y."/>
            <person name="Takahashi Y."/>
            <person name="Nakagawa K."/>
            <person name="Okumura K."/>
            <person name="Nagase T."/>
            <person name="Nomura N."/>
            <person name="Kikuchi H."/>
            <person name="Masuho Y."/>
            <person name="Yamashita R."/>
            <person name="Nakai K."/>
            <person name="Yada T."/>
            <person name="Nakamura Y."/>
            <person name="Ohara O."/>
            <person name="Isogai T."/>
            <person name="Sugano S."/>
        </authorList>
    </citation>
    <scope>NUCLEOTIDE SEQUENCE [LARGE SCALE MRNA]</scope>
    <source>
        <tissue>Placenta</tissue>
    </source>
</reference>
<reference key="4">
    <citation type="journal article" date="2006" name="Nature">
        <title>The DNA sequence and biological annotation of human chromosome 1.</title>
        <authorList>
            <person name="Gregory S.G."/>
            <person name="Barlow K.F."/>
            <person name="McLay K.E."/>
            <person name="Kaul R."/>
            <person name="Swarbreck D."/>
            <person name="Dunham A."/>
            <person name="Scott C.E."/>
            <person name="Howe K.L."/>
            <person name="Woodfine K."/>
            <person name="Spencer C.C.A."/>
            <person name="Jones M.C."/>
            <person name="Gillson C."/>
            <person name="Searle S."/>
            <person name="Zhou Y."/>
            <person name="Kokocinski F."/>
            <person name="McDonald L."/>
            <person name="Evans R."/>
            <person name="Phillips K."/>
            <person name="Atkinson A."/>
            <person name="Cooper R."/>
            <person name="Jones C."/>
            <person name="Hall R.E."/>
            <person name="Andrews T.D."/>
            <person name="Lloyd C."/>
            <person name="Ainscough R."/>
            <person name="Almeida J.P."/>
            <person name="Ambrose K.D."/>
            <person name="Anderson F."/>
            <person name="Andrew R.W."/>
            <person name="Ashwell R.I.S."/>
            <person name="Aubin K."/>
            <person name="Babbage A.K."/>
            <person name="Bagguley C.L."/>
            <person name="Bailey J."/>
            <person name="Beasley H."/>
            <person name="Bethel G."/>
            <person name="Bird C.P."/>
            <person name="Bray-Allen S."/>
            <person name="Brown J.Y."/>
            <person name="Brown A.J."/>
            <person name="Buckley D."/>
            <person name="Burton J."/>
            <person name="Bye J."/>
            <person name="Carder C."/>
            <person name="Chapman J.C."/>
            <person name="Clark S.Y."/>
            <person name="Clarke G."/>
            <person name="Clee C."/>
            <person name="Cobley V."/>
            <person name="Collier R.E."/>
            <person name="Corby N."/>
            <person name="Coville G.J."/>
            <person name="Davies J."/>
            <person name="Deadman R."/>
            <person name="Dunn M."/>
            <person name="Earthrowl M."/>
            <person name="Ellington A.G."/>
            <person name="Errington H."/>
            <person name="Frankish A."/>
            <person name="Frankland J."/>
            <person name="French L."/>
            <person name="Garner P."/>
            <person name="Garnett J."/>
            <person name="Gay L."/>
            <person name="Ghori M.R.J."/>
            <person name="Gibson R."/>
            <person name="Gilby L.M."/>
            <person name="Gillett W."/>
            <person name="Glithero R.J."/>
            <person name="Grafham D.V."/>
            <person name="Griffiths C."/>
            <person name="Griffiths-Jones S."/>
            <person name="Grocock R."/>
            <person name="Hammond S."/>
            <person name="Harrison E.S.I."/>
            <person name="Hart E."/>
            <person name="Haugen E."/>
            <person name="Heath P.D."/>
            <person name="Holmes S."/>
            <person name="Holt K."/>
            <person name="Howden P.J."/>
            <person name="Hunt A.R."/>
            <person name="Hunt S.E."/>
            <person name="Hunter G."/>
            <person name="Isherwood J."/>
            <person name="James R."/>
            <person name="Johnson C."/>
            <person name="Johnson D."/>
            <person name="Joy A."/>
            <person name="Kay M."/>
            <person name="Kershaw J.K."/>
            <person name="Kibukawa M."/>
            <person name="Kimberley A.M."/>
            <person name="King A."/>
            <person name="Knights A.J."/>
            <person name="Lad H."/>
            <person name="Laird G."/>
            <person name="Lawlor S."/>
            <person name="Leongamornlert D.A."/>
            <person name="Lloyd D.M."/>
            <person name="Loveland J."/>
            <person name="Lovell J."/>
            <person name="Lush M.J."/>
            <person name="Lyne R."/>
            <person name="Martin S."/>
            <person name="Mashreghi-Mohammadi M."/>
            <person name="Matthews L."/>
            <person name="Matthews N.S.W."/>
            <person name="McLaren S."/>
            <person name="Milne S."/>
            <person name="Mistry S."/>
            <person name="Moore M.J.F."/>
            <person name="Nickerson T."/>
            <person name="O'Dell C.N."/>
            <person name="Oliver K."/>
            <person name="Palmeiri A."/>
            <person name="Palmer S.A."/>
            <person name="Parker A."/>
            <person name="Patel D."/>
            <person name="Pearce A.V."/>
            <person name="Peck A.I."/>
            <person name="Pelan S."/>
            <person name="Phelps K."/>
            <person name="Phillimore B.J."/>
            <person name="Plumb R."/>
            <person name="Rajan J."/>
            <person name="Raymond C."/>
            <person name="Rouse G."/>
            <person name="Saenphimmachak C."/>
            <person name="Sehra H.K."/>
            <person name="Sheridan E."/>
            <person name="Shownkeen R."/>
            <person name="Sims S."/>
            <person name="Skuce C.D."/>
            <person name="Smith M."/>
            <person name="Steward C."/>
            <person name="Subramanian S."/>
            <person name="Sycamore N."/>
            <person name="Tracey A."/>
            <person name="Tromans A."/>
            <person name="Van Helmond Z."/>
            <person name="Wall M."/>
            <person name="Wallis J.M."/>
            <person name="White S."/>
            <person name="Whitehead S.L."/>
            <person name="Wilkinson J.E."/>
            <person name="Willey D.L."/>
            <person name="Williams H."/>
            <person name="Wilming L."/>
            <person name="Wray P.W."/>
            <person name="Wu Z."/>
            <person name="Coulson A."/>
            <person name="Vaudin M."/>
            <person name="Sulston J.E."/>
            <person name="Durbin R.M."/>
            <person name="Hubbard T."/>
            <person name="Wooster R."/>
            <person name="Dunham I."/>
            <person name="Carter N.P."/>
            <person name="McVean G."/>
            <person name="Ross M.T."/>
            <person name="Harrow J."/>
            <person name="Olson M.V."/>
            <person name="Beck S."/>
            <person name="Rogers J."/>
            <person name="Bentley D.R."/>
        </authorList>
    </citation>
    <scope>NUCLEOTIDE SEQUENCE [LARGE SCALE GENOMIC DNA]</scope>
</reference>
<reference key="5">
    <citation type="submission" date="2005-07" db="EMBL/GenBank/DDBJ databases">
        <authorList>
            <person name="Mural R.J."/>
            <person name="Istrail S."/>
            <person name="Sutton G.G."/>
            <person name="Florea L."/>
            <person name="Halpern A.L."/>
            <person name="Mobarry C.M."/>
            <person name="Lippert R."/>
            <person name="Walenz B."/>
            <person name="Shatkay H."/>
            <person name="Dew I."/>
            <person name="Miller J.R."/>
            <person name="Flanigan M.J."/>
            <person name="Edwards N.J."/>
            <person name="Bolanos R."/>
            <person name="Fasulo D."/>
            <person name="Halldorsson B.V."/>
            <person name="Hannenhalli S."/>
            <person name="Turner R."/>
            <person name="Yooseph S."/>
            <person name="Lu F."/>
            <person name="Nusskern D.R."/>
            <person name="Shue B.C."/>
            <person name="Zheng X.H."/>
            <person name="Zhong F."/>
            <person name="Delcher A.L."/>
            <person name="Huson D.H."/>
            <person name="Kravitz S.A."/>
            <person name="Mouchard L."/>
            <person name="Reinert K."/>
            <person name="Remington K.A."/>
            <person name="Clark A.G."/>
            <person name="Waterman M.S."/>
            <person name="Eichler E.E."/>
            <person name="Adams M.D."/>
            <person name="Hunkapiller M.W."/>
            <person name="Myers E.W."/>
            <person name="Venter J.C."/>
        </authorList>
    </citation>
    <scope>NUCLEOTIDE SEQUENCE [LARGE SCALE GENOMIC DNA]</scope>
</reference>
<reference key="6">
    <citation type="journal article" date="2004" name="Genome Res.">
        <title>The status, quality, and expansion of the NIH full-length cDNA project: the Mammalian Gene Collection (MGC).</title>
        <authorList>
            <consortium name="The MGC Project Team"/>
        </authorList>
    </citation>
    <scope>NUCLEOTIDE SEQUENCE [LARGE SCALE MRNA]</scope>
    <source>
        <tissue>Brain</tissue>
    </source>
</reference>
<reference key="7">
    <citation type="journal article" date="2004" name="J. Biol. Chem.">
        <title>Identification of tyrosine sulfation in extracellular leucine-rich repeat proteins using mass spectrometry.</title>
        <authorList>
            <person name="Onnerfjord P."/>
            <person name="Heathfield T.F."/>
            <person name="Heinegaard D."/>
        </authorList>
    </citation>
    <scope>SULFATION AT TYR-20; TYR-38; TYR-39; TYR-45; TYR-47; TYR-53 AND TYR-55</scope>
    <scope>LACK OF SULFATION AT TYR-63 AND TYR-65</scope>
    <scope>PYROGLUTAMATE FORMATION AT GLN-19</scope>
    <scope>IDENTIFICATION BY MASS SPECTROMETRY</scope>
</reference>
<reference key="8">
    <citation type="journal article" date="2009" name="J. Proteome Res.">
        <title>Glycoproteomics analysis of human liver tissue by combination of multiple enzyme digestion and hydrazide chemistry.</title>
        <authorList>
            <person name="Chen R."/>
            <person name="Jiang X."/>
            <person name="Sun D."/>
            <person name="Han G."/>
            <person name="Wang F."/>
            <person name="Ye M."/>
            <person name="Wang L."/>
            <person name="Zou H."/>
        </authorList>
    </citation>
    <scope>GLYCOSYLATION [LARGE SCALE ANALYSIS] AT ASN-201</scope>
    <source>
        <tissue>Liver</tissue>
    </source>
</reference>
<feature type="signal peptide" evidence="1">
    <location>
        <begin position="1"/>
        <end position="18"/>
    </location>
</feature>
<feature type="chain" id="PRO_0000032739" description="Fibromodulin">
    <location>
        <begin position="19"/>
        <end position="376"/>
    </location>
</feature>
<feature type="domain" description="LRRNT">
    <location>
        <begin position="67"/>
        <end position="105"/>
    </location>
</feature>
<feature type="repeat" description="LRR 1">
    <location>
        <begin position="106"/>
        <end position="127"/>
    </location>
</feature>
<feature type="repeat" description="LRR 2">
    <location>
        <begin position="130"/>
        <end position="151"/>
    </location>
</feature>
<feature type="repeat" description="LRR 3">
    <location>
        <begin position="156"/>
        <end position="176"/>
    </location>
</feature>
<feature type="repeat" description="LRR 4">
    <location>
        <begin position="177"/>
        <end position="198"/>
    </location>
</feature>
<feature type="repeat" description="LRR 5">
    <location>
        <begin position="201"/>
        <end position="222"/>
    </location>
</feature>
<feature type="repeat" description="LRR 6">
    <location>
        <begin position="224"/>
        <end position="245"/>
    </location>
</feature>
<feature type="repeat" description="LRR 7">
    <location>
        <begin position="246"/>
        <end position="266"/>
    </location>
</feature>
<feature type="repeat" description="LRR 8">
    <location>
        <begin position="269"/>
        <end position="289"/>
    </location>
</feature>
<feature type="repeat" description="LRR 9">
    <location>
        <begin position="294"/>
        <end position="315"/>
    </location>
</feature>
<feature type="repeat" description="LRR 10">
    <location>
        <begin position="316"/>
        <end position="335"/>
    </location>
</feature>
<feature type="repeat" description="LRR 11">
    <location>
        <begin position="344"/>
        <end position="365"/>
    </location>
</feature>
<feature type="site" description="Not sulfated" evidence="3">
    <location>
        <position position="63"/>
    </location>
</feature>
<feature type="site" description="Not sulfated" evidence="3">
    <location>
        <position position="65"/>
    </location>
</feature>
<feature type="modified residue" description="Pyrrolidone carboxylic acid" evidence="3">
    <location>
        <position position="19"/>
    </location>
</feature>
<feature type="modified residue" description="Sulfotyrosine" evidence="3">
    <location>
        <position position="20"/>
    </location>
</feature>
<feature type="modified residue" description="Sulfotyrosine" evidence="5">
    <location>
        <position position="38"/>
    </location>
</feature>
<feature type="modified residue" description="Sulfotyrosine" evidence="5">
    <location>
        <position position="39"/>
    </location>
</feature>
<feature type="modified residue" description="Sulfotyrosine" evidence="5">
    <location>
        <position position="45"/>
    </location>
</feature>
<feature type="modified residue" description="Sulfotyrosine" evidence="5">
    <location>
        <position position="47"/>
    </location>
</feature>
<feature type="modified residue" description="Sulfotyrosine" evidence="3">
    <location>
        <position position="53"/>
    </location>
</feature>
<feature type="modified residue" description="Sulfotyrosine" evidence="3">
    <location>
        <position position="55"/>
    </location>
</feature>
<feature type="glycosylation site" description="N-linked (GlcNAc...) (keratan sulfate) asparagine" evidence="1">
    <location>
        <position position="127"/>
    </location>
</feature>
<feature type="glycosylation site" description="N-linked (GlcNAc...) (keratan sulfate) asparagine" evidence="1">
    <location>
        <position position="166"/>
    </location>
</feature>
<feature type="glycosylation site" description="N-linked (GlcNAc...) (keratan sulfate) asparagine" evidence="1">
    <location>
        <position position="201"/>
    </location>
</feature>
<feature type="glycosylation site" description="N-linked (GlcNAc...) (keratan sulfate) asparagine" evidence="1">
    <location>
        <position position="291"/>
    </location>
</feature>
<feature type="glycosylation site" description="N-linked (GlcNAc...) asparagine" evidence="2">
    <location>
        <position position="341"/>
    </location>
</feature>
<feature type="disulfide bond" evidence="1">
    <location>
        <begin position="334"/>
        <end position="367"/>
    </location>
</feature>
<feature type="sequence conflict" description="In Ref. 2; CAA53233." evidence="4" ref="2">
    <original>T</original>
    <variation>A</variation>
    <location>
        <position position="4"/>
    </location>
</feature>
<feature type="sequence conflict" description="In Ref. 2; CAA53233." evidence="4" ref="2">
    <original>P</original>
    <variation>L</variation>
    <location>
        <position position="87"/>
    </location>
</feature>
<feature type="sequence conflict" description="In Ref. 2; CAA53233." evidence="4" ref="2">
    <original>N</original>
    <variation>D</variation>
    <location>
        <position position="210"/>
    </location>
</feature>
<feature type="sequence conflict" description="In Ref. 1; CAA51418." evidence="4" ref="1">
    <original>I</original>
    <variation>Y</variation>
    <location>
        <position position="226"/>
    </location>
</feature>
<feature type="sequence conflict" description="In Ref. 1; CAA51418." evidence="4" ref="1">
    <original>K</original>
    <variation>Q</variation>
    <location>
        <position position="344"/>
    </location>
</feature>
<feature type="sequence conflict" description="In Ref. 1; CAA51418 and 2; CAA53233." evidence="4" ref="1 2">
    <original>L</original>
    <variation>V</variation>
    <location>
        <position position="348"/>
    </location>
</feature>
<feature type="sequence conflict" description="In Ref. 1; CAA51418." evidence="4" ref="1">
    <original>I</original>
    <variation>M</variation>
    <location>
        <position position="355"/>
    </location>
</feature>
<feature type="sequence conflict" description="In Ref. 1; CAA51418." evidence="4" ref="1">
    <original>D</original>
    <variation>E</variation>
    <location>
        <position position="363"/>
    </location>
</feature>
<feature type="strand" evidence="6">
    <location>
        <begin position="89"/>
        <end position="91"/>
    </location>
</feature>
<feature type="strand" evidence="6">
    <location>
        <begin position="108"/>
        <end position="111"/>
    </location>
</feature>
<feature type="turn" evidence="6">
    <location>
        <begin position="122"/>
        <end position="125"/>
    </location>
</feature>
<feature type="strand" evidence="6">
    <location>
        <begin position="133"/>
        <end position="135"/>
    </location>
</feature>
<feature type="helix" evidence="6">
    <location>
        <begin position="143"/>
        <end position="145"/>
    </location>
</feature>
<feature type="turn" evidence="6">
    <location>
        <begin position="148"/>
        <end position="153"/>
    </location>
</feature>
<feature type="strand" evidence="6">
    <location>
        <begin position="159"/>
        <end position="161"/>
    </location>
</feature>
<feature type="strand" evidence="6">
    <location>
        <begin position="164"/>
        <end position="166"/>
    </location>
</feature>
<feature type="strand" evidence="6">
    <location>
        <begin position="179"/>
        <end position="182"/>
    </location>
</feature>
<feature type="turn" evidence="6">
    <location>
        <begin position="193"/>
        <end position="198"/>
    </location>
</feature>
<feature type="strand" evidence="6">
    <location>
        <begin position="204"/>
        <end position="206"/>
    </location>
</feature>
<feature type="turn" evidence="6">
    <location>
        <begin position="216"/>
        <end position="221"/>
    </location>
</feature>
<feature type="strand" evidence="6">
    <location>
        <begin position="227"/>
        <end position="229"/>
    </location>
</feature>
<feature type="strand" evidence="6">
    <location>
        <begin position="248"/>
        <end position="250"/>
    </location>
</feature>
<feature type="turn" evidence="6">
    <location>
        <begin position="261"/>
        <end position="266"/>
    </location>
</feature>
<feature type="strand" evidence="6">
    <location>
        <begin position="272"/>
        <end position="274"/>
    </location>
</feature>
<feature type="helix" evidence="6">
    <location>
        <begin position="282"/>
        <end position="284"/>
    </location>
</feature>
<feature type="turn" evidence="6">
    <location>
        <begin position="287"/>
        <end position="290"/>
    </location>
</feature>
<feature type="strand" evidence="6">
    <location>
        <begin position="297"/>
        <end position="299"/>
    </location>
</feature>
<feature type="strand" evidence="6">
    <location>
        <begin position="317"/>
        <end position="319"/>
    </location>
</feature>
<feature type="helix" evidence="6">
    <location>
        <begin position="330"/>
        <end position="332"/>
    </location>
</feature>
<feature type="strand" evidence="6">
    <location>
        <begin position="338"/>
        <end position="340"/>
    </location>
</feature>
<feature type="strand" evidence="6">
    <location>
        <begin position="347"/>
        <end position="349"/>
    </location>
</feature>
<feature type="strand" evidence="6">
    <location>
        <begin position="352"/>
        <end position="354"/>
    </location>
</feature>
<feature type="helix" evidence="6">
    <location>
        <begin position="357"/>
        <end position="359"/>
    </location>
</feature>
<feature type="helix" evidence="6">
    <location>
        <begin position="364"/>
        <end position="366"/>
    </location>
</feature>
<feature type="strand" evidence="6">
    <location>
        <begin position="373"/>
        <end position="375"/>
    </location>
</feature>
<comment type="function">
    <text evidence="1">Affects the rate of fibrils formation. May have a primary role in collagen fibrillogenesis (By similarity).</text>
</comment>
<comment type="subunit">
    <text evidence="1">Binds to type I and type II collagen.</text>
</comment>
<comment type="subcellular location">
    <subcellularLocation>
        <location>Secreted</location>
        <location>Extracellular space</location>
        <location>Extracellular matrix</location>
    </subcellularLocation>
</comment>
<comment type="PTM">
    <text evidence="3">Binds keratan sulfate chains.</text>
</comment>
<comment type="similarity">
    <text evidence="4">Belongs to the small leucine-rich proteoglycan (SLRP) family. SLRP class II subfamily.</text>
</comment>
<sequence length="376" mass="43179">MQWTSLLLLAGLFSLSQAQYEDDPHWWFHYLRSQQSTYYDPYDPYPYETYEPYPYGVDEGPAYTYGSPSPPDPRDCPQECDCPPNFPTAMYCDNRNLKYLPFVPSRMKYVYFQNNQITSIQEGVFDNATGLLWIALHGNQITSDKVGRKVFSKLRHLERLYLDHNNLTRMPGPLPRSLRELHLDHNQISRVPNNALEGLENLTALYLQHNEIQEVGSSMRGLRSLILLDLSYNHLRKVPDGLPSALEQLYMEHNNVYTVPDSYFRGAPKLLYVRLSHNSLTNNGLASNTFNSSSLLELDLSYNQLQKIPPVNTNLENLYLQGNRINEFSISSFCTVVDVVNFSKLQVLRLDGNEIKRSAMPADAPLCLRLASLIEI</sequence>